<keyword id="KW-0326">Glycosidase</keyword>
<keyword id="KW-0378">Hydrolase</keyword>
<evidence type="ECO:0000255" key="1">
    <source>
        <dbReference type="HAMAP-Rule" id="MF_01574"/>
    </source>
</evidence>
<proteinExistence type="inferred from homology"/>
<accession>Q6GEP0</accession>
<organism>
    <name type="scientific">Staphylococcus aureus (strain MRSA252)</name>
    <dbReference type="NCBI Taxonomy" id="282458"/>
    <lineage>
        <taxon>Bacteria</taxon>
        <taxon>Bacillati</taxon>
        <taxon>Bacillota</taxon>
        <taxon>Bacilli</taxon>
        <taxon>Bacillales</taxon>
        <taxon>Staphylococcaceae</taxon>
        <taxon>Staphylococcus</taxon>
    </lineage>
</organism>
<protein>
    <recommendedName>
        <fullName evidence="1">6-phospho-beta-galactosidase</fullName>
        <ecNumber evidence="1">3.2.1.85</ecNumber>
    </recommendedName>
    <alternativeName>
        <fullName evidence="1">Beta-D-phosphogalactoside galactohydrolase</fullName>
        <shortName evidence="1">PGALase</shortName>
    </alternativeName>
    <alternativeName>
        <fullName evidence="1">P-beta-Gal</fullName>
        <shortName evidence="1">PBG</shortName>
    </alternativeName>
</protein>
<reference key="1">
    <citation type="journal article" date="2004" name="Proc. Natl. Acad. Sci. U.S.A.">
        <title>Complete genomes of two clinical Staphylococcus aureus strains: evidence for the rapid evolution of virulence and drug resistance.</title>
        <authorList>
            <person name="Holden M.T.G."/>
            <person name="Feil E.J."/>
            <person name="Lindsay J.A."/>
            <person name="Peacock S.J."/>
            <person name="Day N.P.J."/>
            <person name="Enright M.C."/>
            <person name="Foster T.J."/>
            <person name="Moore C.E."/>
            <person name="Hurst L."/>
            <person name="Atkin R."/>
            <person name="Barron A."/>
            <person name="Bason N."/>
            <person name="Bentley S.D."/>
            <person name="Chillingworth C."/>
            <person name="Chillingworth T."/>
            <person name="Churcher C."/>
            <person name="Clark L."/>
            <person name="Corton C."/>
            <person name="Cronin A."/>
            <person name="Doggett J."/>
            <person name="Dowd L."/>
            <person name="Feltwell T."/>
            <person name="Hance Z."/>
            <person name="Harris B."/>
            <person name="Hauser H."/>
            <person name="Holroyd S."/>
            <person name="Jagels K."/>
            <person name="James K.D."/>
            <person name="Lennard N."/>
            <person name="Line A."/>
            <person name="Mayes R."/>
            <person name="Moule S."/>
            <person name="Mungall K."/>
            <person name="Ormond D."/>
            <person name="Quail M.A."/>
            <person name="Rabbinowitsch E."/>
            <person name="Rutherford K.M."/>
            <person name="Sanders M."/>
            <person name="Sharp S."/>
            <person name="Simmonds M."/>
            <person name="Stevens K."/>
            <person name="Whitehead S."/>
            <person name="Barrell B.G."/>
            <person name="Spratt B.G."/>
            <person name="Parkhill J."/>
        </authorList>
    </citation>
    <scope>NUCLEOTIDE SEQUENCE [LARGE SCALE GENOMIC DNA]</scope>
    <source>
        <strain>MRSA252</strain>
    </source>
</reference>
<dbReference type="EC" id="3.2.1.85" evidence="1"/>
<dbReference type="EMBL" id="BX571856">
    <property type="protein sequence ID" value="CAG41258.1"/>
    <property type="molecule type" value="Genomic_DNA"/>
</dbReference>
<dbReference type="RefSeq" id="WP_000169223.1">
    <property type="nucleotide sequence ID" value="NC_002952.2"/>
</dbReference>
<dbReference type="SMR" id="Q6GEP0"/>
<dbReference type="CAZy" id="GH1">
    <property type="family name" value="Glycoside Hydrolase Family 1"/>
</dbReference>
<dbReference type="KEGG" id="sar:SAR2280"/>
<dbReference type="HOGENOM" id="CLU_001859_1_3_9"/>
<dbReference type="UniPathway" id="UPA00542">
    <property type="reaction ID" value="UER00605"/>
</dbReference>
<dbReference type="Proteomes" id="UP000000596">
    <property type="component" value="Chromosome"/>
</dbReference>
<dbReference type="GO" id="GO:0005829">
    <property type="term" value="C:cytosol"/>
    <property type="evidence" value="ECO:0007669"/>
    <property type="project" value="TreeGrafter"/>
</dbReference>
<dbReference type="GO" id="GO:0033920">
    <property type="term" value="F:6-phospho-beta-galactosidase activity"/>
    <property type="evidence" value="ECO:0007669"/>
    <property type="project" value="UniProtKB-UniRule"/>
</dbReference>
<dbReference type="GO" id="GO:0008422">
    <property type="term" value="F:beta-glucosidase activity"/>
    <property type="evidence" value="ECO:0007669"/>
    <property type="project" value="TreeGrafter"/>
</dbReference>
<dbReference type="GO" id="GO:0019512">
    <property type="term" value="P:lactose catabolic process via tagatose-6-phosphate"/>
    <property type="evidence" value="ECO:0007669"/>
    <property type="project" value="InterPro"/>
</dbReference>
<dbReference type="FunFam" id="3.20.20.80:FF:000004">
    <property type="entry name" value="Beta-glucosidase 6-phospho-beta-glucosidase"/>
    <property type="match status" value="1"/>
</dbReference>
<dbReference type="Gene3D" id="3.20.20.80">
    <property type="entry name" value="Glycosidases"/>
    <property type="match status" value="1"/>
</dbReference>
<dbReference type="HAMAP" id="MF_01574">
    <property type="entry name" value="LacG"/>
    <property type="match status" value="1"/>
</dbReference>
<dbReference type="InterPro" id="IPR005928">
    <property type="entry name" value="6P-beta-galactosidase"/>
</dbReference>
<dbReference type="InterPro" id="IPR001360">
    <property type="entry name" value="Glyco_hydro_1"/>
</dbReference>
<dbReference type="InterPro" id="IPR018120">
    <property type="entry name" value="Glyco_hydro_1_AS"/>
</dbReference>
<dbReference type="InterPro" id="IPR033132">
    <property type="entry name" value="Glyco_hydro_1_N_CS"/>
</dbReference>
<dbReference type="InterPro" id="IPR017853">
    <property type="entry name" value="Glycoside_hydrolase_SF"/>
</dbReference>
<dbReference type="NCBIfam" id="TIGR01233">
    <property type="entry name" value="lacG"/>
    <property type="match status" value="1"/>
</dbReference>
<dbReference type="NCBIfam" id="NF010036">
    <property type="entry name" value="PRK13511.1"/>
    <property type="match status" value="1"/>
</dbReference>
<dbReference type="PANTHER" id="PTHR10353">
    <property type="entry name" value="GLYCOSYL HYDROLASE"/>
    <property type="match status" value="1"/>
</dbReference>
<dbReference type="PANTHER" id="PTHR10353:SF36">
    <property type="entry name" value="LP05116P"/>
    <property type="match status" value="1"/>
</dbReference>
<dbReference type="Pfam" id="PF00232">
    <property type="entry name" value="Glyco_hydro_1"/>
    <property type="match status" value="1"/>
</dbReference>
<dbReference type="PRINTS" id="PR00131">
    <property type="entry name" value="GLHYDRLASE1"/>
</dbReference>
<dbReference type="SUPFAM" id="SSF51445">
    <property type="entry name" value="(Trans)glycosidases"/>
    <property type="match status" value="1"/>
</dbReference>
<dbReference type="PROSITE" id="PS00572">
    <property type="entry name" value="GLYCOSYL_HYDROL_F1_1"/>
    <property type="match status" value="1"/>
</dbReference>
<dbReference type="PROSITE" id="PS00653">
    <property type="entry name" value="GLYCOSYL_HYDROL_F1_2"/>
    <property type="match status" value="1"/>
</dbReference>
<comment type="catalytic activity">
    <reaction evidence="1">
        <text>a 6-phospho-beta-D-galactoside + H2O = D-galactose 6-phosphate + an alcohol</text>
        <dbReference type="Rhea" id="RHEA:24568"/>
        <dbReference type="ChEBI" id="CHEBI:15377"/>
        <dbReference type="ChEBI" id="CHEBI:30879"/>
        <dbReference type="ChEBI" id="CHEBI:58534"/>
        <dbReference type="ChEBI" id="CHEBI:91004"/>
        <dbReference type="EC" id="3.2.1.85"/>
    </reaction>
</comment>
<comment type="pathway">
    <text evidence="1">Carbohydrate metabolism; lactose degradation; D-galactose 6-phosphate and beta-D-glucose from lactose 6-phosphate: step 1/1.</text>
</comment>
<comment type="similarity">
    <text evidence="1">Belongs to the glycosyl hydrolase 1 family.</text>
</comment>
<feature type="chain" id="PRO_0000063887" description="6-phospho-beta-galactosidase">
    <location>
        <begin position="1"/>
        <end position="470"/>
    </location>
</feature>
<feature type="active site" description="Proton donor" evidence="1">
    <location>
        <position position="160"/>
    </location>
</feature>
<feature type="active site" description="Nucleophile" evidence="1">
    <location>
        <position position="375"/>
    </location>
</feature>
<feature type="binding site" evidence="1">
    <location>
        <position position="19"/>
    </location>
    <ligand>
        <name>D-galactose 6-phosphate</name>
        <dbReference type="ChEBI" id="CHEBI:91004"/>
    </ligand>
</feature>
<feature type="binding site" evidence="1">
    <location>
        <position position="116"/>
    </location>
    <ligand>
        <name>D-galactose 6-phosphate</name>
        <dbReference type="ChEBI" id="CHEBI:91004"/>
    </ligand>
</feature>
<feature type="binding site" evidence="1">
    <location>
        <position position="159"/>
    </location>
    <ligand>
        <name>D-galactose 6-phosphate</name>
        <dbReference type="ChEBI" id="CHEBI:91004"/>
    </ligand>
</feature>
<feature type="binding site" evidence="1">
    <location>
        <position position="160"/>
    </location>
    <ligand>
        <name>D-galactose 6-phosphate</name>
        <dbReference type="ChEBI" id="CHEBI:91004"/>
    </ligand>
</feature>
<feature type="binding site" evidence="1">
    <location>
        <position position="297"/>
    </location>
    <ligand>
        <name>D-galactose 6-phosphate</name>
        <dbReference type="ChEBI" id="CHEBI:91004"/>
    </ligand>
</feature>
<feature type="binding site" evidence="1">
    <location>
        <position position="430"/>
    </location>
    <ligand>
        <name>D-galactose 6-phosphate</name>
        <dbReference type="ChEBI" id="CHEBI:91004"/>
    </ligand>
</feature>
<feature type="binding site" evidence="1">
    <location>
        <position position="431"/>
    </location>
    <ligand>
        <name>D-galactose 6-phosphate</name>
        <dbReference type="ChEBI" id="CHEBI:91004"/>
    </ligand>
</feature>
<feature type="binding site" evidence="1">
    <location>
        <position position="437"/>
    </location>
    <ligand>
        <name>D-galactose 6-phosphate</name>
        <dbReference type="ChEBI" id="CHEBI:91004"/>
    </ligand>
</feature>
<feature type="binding site" evidence="1">
    <location>
        <position position="439"/>
    </location>
    <ligand>
        <name>D-galactose 6-phosphate</name>
        <dbReference type="ChEBI" id="CHEBI:91004"/>
    </ligand>
</feature>
<name>LACG_STAAR</name>
<gene>
    <name evidence="1" type="primary">lacG</name>
    <name type="ordered locus">SAR2280</name>
</gene>
<sequence>MTKTLPEDFIFGGATAAYQAEGATNTDGKGRVAWDTYLEENYWYTAEPASDFYNRYPVDLELSEKFGVNGIRISIAWSRIFPNGYGEVNPKGVEYYHKLFAECHKRHVEPFVTLHHFDTPEVLHKDGDFLNRKTIDYFVDYAEYCFKEFPEVKYWTTFNEIGPIGDGQYLVGKFPPGIKYDFEKVFQSHHNMMVAHARAVKLFKDGGYQGEIGVVHALPTKYPFDPSNPEDVRAAELEDIIHNKFILDATYLGEYSRETMEGVQHILSVNGGKLNITDEDYAILDAAKDLNDFLGINYYMSDWMRGYDGESEITHNATGDKGGSKYQLKGVGQREFDVDVPRTDWDWMIYPQGLYDQIMRVVKDYPNYHKIYITENGLGYKDEFIESEKTVHDDARIDYVRQHLNVIADAIKDGANVKGYFIWSLMDVFSWSNGYEKRYGLFYVDFETQERYPKKSAYWYKELAETKEIK</sequence>